<dbReference type="EMBL" id="CU928161">
    <property type="protein sequence ID" value="CAR04842.1"/>
    <property type="molecule type" value="Genomic_DNA"/>
</dbReference>
<dbReference type="RefSeq" id="WP_000510964.1">
    <property type="nucleotide sequence ID" value="NC_011742.1"/>
</dbReference>
<dbReference type="SMR" id="B7MC01"/>
<dbReference type="KEGG" id="ecz:ECS88_3616"/>
<dbReference type="HOGENOM" id="CLU_027647_0_0_6"/>
<dbReference type="Proteomes" id="UP000000747">
    <property type="component" value="Chromosome"/>
</dbReference>
<dbReference type="GO" id="GO:0005886">
    <property type="term" value="C:plasma membrane"/>
    <property type="evidence" value="ECO:0007669"/>
    <property type="project" value="UniProtKB-SubCell"/>
</dbReference>
<dbReference type="GO" id="GO:0022857">
    <property type="term" value="F:transmembrane transporter activity"/>
    <property type="evidence" value="ECO:0007669"/>
    <property type="project" value="UniProtKB-UniRule"/>
</dbReference>
<dbReference type="GO" id="GO:0046942">
    <property type="term" value="P:carboxylic acid transport"/>
    <property type="evidence" value="ECO:0007669"/>
    <property type="project" value="InterPro"/>
</dbReference>
<dbReference type="HAMAP" id="MF_01545">
    <property type="entry name" value="AaeB"/>
    <property type="match status" value="1"/>
</dbReference>
<dbReference type="InterPro" id="IPR006726">
    <property type="entry name" value="PHBA_efflux_AaeB/fusaric-R"/>
</dbReference>
<dbReference type="InterPro" id="IPR023706">
    <property type="entry name" value="PHBA_efflux_pump_AaeB"/>
</dbReference>
<dbReference type="NCBIfam" id="NF007916">
    <property type="entry name" value="PRK10631.1"/>
    <property type="match status" value="1"/>
</dbReference>
<dbReference type="PANTHER" id="PTHR30509:SF9">
    <property type="entry name" value="MULTIDRUG RESISTANCE PROTEIN MDTO"/>
    <property type="match status" value="1"/>
</dbReference>
<dbReference type="PANTHER" id="PTHR30509">
    <property type="entry name" value="P-HYDROXYBENZOIC ACID EFFLUX PUMP SUBUNIT-RELATED"/>
    <property type="match status" value="1"/>
</dbReference>
<dbReference type="Pfam" id="PF04632">
    <property type="entry name" value="FUSC"/>
    <property type="match status" value="1"/>
</dbReference>
<name>AAEB_ECO45</name>
<proteinExistence type="inferred from homology"/>
<evidence type="ECO:0000255" key="1">
    <source>
        <dbReference type="HAMAP-Rule" id="MF_01545"/>
    </source>
</evidence>
<feature type="chain" id="PRO_1000146732" description="p-hydroxybenzoic acid efflux pump subunit AaeB">
    <location>
        <begin position="1"/>
        <end position="655"/>
    </location>
</feature>
<feature type="transmembrane region" description="Helical" evidence="1">
    <location>
        <begin position="13"/>
        <end position="33"/>
    </location>
</feature>
<feature type="transmembrane region" description="Helical" evidence="1">
    <location>
        <begin position="38"/>
        <end position="58"/>
    </location>
</feature>
<feature type="transmembrane region" description="Helical" evidence="1">
    <location>
        <begin position="69"/>
        <end position="89"/>
    </location>
</feature>
<feature type="transmembrane region" description="Helical" evidence="1">
    <location>
        <begin position="93"/>
        <end position="113"/>
    </location>
</feature>
<feature type="transmembrane region" description="Helical" evidence="1">
    <location>
        <begin position="121"/>
        <end position="141"/>
    </location>
</feature>
<feature type="transmembrane region" description="Helical" evidence="1">
    <location>
        <begin position="152"/>
        <end position="172"/>
    </location>
</feature>
<feature type="transmembrane region" description="Helical" evidence="1">
    <location>
        <begin position="370"/>
        <end position="390"/>
    </location>
</feature>
<feature type="transmembrane region" description="Helical" evidence="1">
    <location>
        <begin position="407"/>
        <end position="427"/>
    </location>
</feature>
<feature type="transmembrane region" description="Helical" evidence="1">
    <location>
        <begin position="431"/>
        <end position="451"/>
    </location>
</feature>
<feature type="transmembrane region" description="Helical" evidence="1">
    <location>
        <begin position="459"/>
        <end position="479"/>
    </location>
</feature>
<feature type="transmembrane region" description="Helical" evidence="1">
    <location>
        <begin position="482"/>
        <end position="502"/>
    </location>
</feature>
<organism>
    <name type="scientific">Escherichia coli O45:K1 (strain S88 / ExPEC)</name>
    <dbReference type="NCBI Taxonomy" id="585035"/>
    <lineage>
        <taxon>Bacteria</taxon>
        <taxon>Pseudomonadati</taxon>
        <taxon>Pseudomonadota</taxon>
        <taxon>Gammaproteobacteria</taxon>
        <taxon>Enterobacterales</taxon>
        <taxon>Enterobacteriaceae</taxon>
        <taxon>Escherichia</taxon>
    </lineage>
</organism>
<comment type="function">
    <text evidence="1">Forms an efflux pump with AaeA. Could function as a metabolic relief valve, allowing to eliminate certain compounds when they accumulate to high levels in the cell.</text>
</comment>
<comment type="subcellular location">
    <subcellularLocation>
        <location evidence="1">Cell inner membrane</location>
        <topology evidence="1">Multi-pass membrane protein</topology>
    </subcellularLocation>
</comment>
<comment type="induction">
    <text evidence="1">Positively coregulated with aaeA and aaeX by AaeR.</text>
</comment>
<comment type="similarity">
    <text evidence="1">Belongs to the aromatic acid exporter ArAE (TC 2.A.85) family.</text>
</comment>
<gene>
    <name evidence="1" type="primary">aaeB</name>
    <name type="ordered locus">ECS88_3616</name>
</gene>
<sequence>MGIFSIANQHIRFAVKLATAIVLALFVGFHFQLETPRWAVLTAAIVAAGPAFAAGGEPYSGAIRYRGFLRIIGTFIGCIAGLVIIIAMIRAPLLMILVCCIWAGFCTWISSLVRIENSYAWGLAGYTALIIVITIQPEPLLTPQFAVERCSEIVIGIVCAIMADLLFSPRSIKQEVDRELESLLVAQYQLMQLCIKHGDGEVVDKAWGDLVRRTTALQGMRSNLNMESSRWARANRRLKAINTLSLTLITQSCETYLIQNTRPELITDTFREFFDTPVETAQDVHKQLKRLRRVIAWTGERETPVTIYSWVAAATRYQLLKRGVISNTKINATEEEILQGEPEVKVESAERHHAMVNFWRTTLSCILGTLFWLWTGWTSGSGAMVMIAVVTSLAMRLPNPRMVAIDFIYGTLAALPLGLLYFLVIIPNTQQSMLLLCISLAVLGFFLGIEVQKRRLGSMGALASTINIIVLDNPMTFHFSQFLDSALGQIVGCVLAFTVILLVRDKSRDRTGRVLLNQFVSAAVSAMTTNVARRKENHLPALYQQLFLLMNKFPGDLPKFRLALTMIIAHQRLRDAPIPVNEDLSAFHRQMRRTADHVISARSDDKRRRYFGQLLEELEIYQEKLRIWQAPPQVTEPVHRLTGMLHKYQHALTDS</sequence>
<keyword id="KW-0997">Cell inner membrane</keyword>
<keyword id="KW-1003">Cell membrane</keyword>
<keyword id="KW-0472">Membrane</keyword>
<keyword id="KW-1185">Reference proteome</keyword>
<keyword id="KW-0812">Transmembrane</keyword>
<keyword id="KW-1133">Transmembrane helix</keyword>
<keyword id="KW-0813">Transport</keyword>
<accession>B7MC01</accession>
<reference key="1">
    <citation type="journal article" date="2009" name="PLoS Genet.">
        <title>Organised genome dynamics in the Escherichia coli species results in highly diverse adaptive paths.</title>
        <authorList>
            <person name="Touchon M."/>
            <person name="Hoede C."/>
            <person name="Tenaillon O."/>
            <person name="Barbe V."/>
            <person name="Baeriswyl S."/>
            <person name="Bidet P."/>
            <person name="Bingen E."/>
            <person name="Bonacorsi S."/>
            <person name="Bouchier C."/>
            <person name="Bouvet O."/>
            <person name="Calteau A."/>
            <person name="Chiapello H."/>
            <person name="Clermont O."/>
            <person name="Cruveiller S."/>
            <person name="Danchin A."/>
            <person name="Diard M."/>
            <person name="Dossat C."/>
            <person name="Karoui M.E."/>
            <person name="Frapy E."/>
            <person name="Garry L."/>
            <person name="Ghigo J.M."/>
            <person name="Gilles A.M."/>
            <person name="Johnson J."/>
            <person name="Le Bouguenec C."/>
            <person name="Lescat M."/>
            <person name="Mangenot S."/>
            <person name="Martinez-Jehanne V."/>
            <person name="Matic I."/>
            <person name="Nassif X."/>
            <person name="Oztas S."/>
            <person name="Petit M.A."/>
            <person name="Pichon C."/>
            <person name="Rouy Z."/>
            <person name="Ruf C.S."/>
            <person name="Schneider D."/>
            <person name="Tourret J."/>
            <person name="Vacherie B."/>
            <person name="Vallenet D."/>
            <person name="Medigue C."/>
            <person name="Rocha E.P.C."/>
            <person name="Denamur E."/>
        </authorList>
    </citation>
    <scope>NUCLEOTIDE SEQUENCE [LARGE SCALE GENOMIC DNA]</scope>
    <source>
        <strain>S88 / ExPEC</strain>
    </source>
</reference>
<protein>
    <recommendedName>
        <fullName evidence="1">p-hydroxybenzoic acid efflux pump subunit AaeB</fullName>
        <shortName evidence="1">pHBA efflux pump protein B</shortName>
    </recommendedName>
</protein>